<dbReference type="PIR" id="S06668">
    <property type="entry name" value="S06668"/>
</dbReference>
<dbReference type="SMR" id="P15230"/>
<dbReference type="GO" id="GO:0005576">
    <property type="term" value="C:extracellular region"/>
    <property type="evidence" value="ECO:0007669"/>
    <property type="project" value="UniProtKB-SubCell"/>
</dbReference>
<dbReference type="GO" id="GO:0008200">
    <property type="term" value="F:ion channel inhibitor activity"/>
    <property type="evidence" value="ECO:0007669"/>
    <property type="project" value="InterPro"/>
</dbReference>
<dbReference type="GO" id="GO:0015459">
    <property type="term" value="F:potassium channel regulator activity"/>
    <property type="evidence" value="ECO:0007669"/>
    <property type="project" value="UniProtKB-KW"/>
</dbReference>
<dbReference type="GO" id="GO:0090729">
    <property type="term" value="F:toxin activity"/>
    <property type="evidence" value="ECO:0007669"/>
    <property type="project" value="UniProtKB-KW"/>
</dbReference>
<dbReference type="InterPro" id="IPR036574">
    <property type="entry name" value="Scorpion_toxin-like_sf"/>
</dbReference>
<dbReference type="InterPro" id="IPR008911">
    <property type="entry name" value="Toxin_alpha-KTx_8/9"/>
</dbReference>
<dbReference type="Pfam" id="PF05453">
    <property type="entry name" value="Toxin_6"/>
    <property type="match status" value="1"/>
</dbReference>
<dbReference type="SUPFAM" id="SSF57095">
    <property type="entry name" value="Scorpion toxin-like"/>
    <property type="match status" value="1"/>
</dbReference>
<keyword id="KW-0903">Direct protein sequencing</keyword>
<keyword id="KW-0872">Ion channel impairing toxin</keyword>
<keyword id="KW-0528">Neurotoxin</keyword>
<keyword id="KW-0632">Potassium channel impairing toxin</keyword>
<keyword id="KW-0964">Secreted</keyword>
<keyword id="KW-0800">Toxin</keyword>
<name>KAX9J_HOTTS</name>
<feature type="peptide" id="PRO_0000044540" description="Peptide 2">
    <location>
        <begin position="1"/>
        <end position="28"/>
    </location>
</feature>
<proteinExistence type="evidence at protein level"/>
<evidence type="ECO:0000250" key="1"/>
<evidence type="ECO:0000269" key="2">
    <source>
    </source>
</evidence>
<evidence type="ECO:0000303" key="3">
    <source>
    </source>
</evidence>
<evidence type="ECO:0000305" key="4"/>
<evidence type="ECO:0000305" key="5">
    <source>
    </source>
</evidence>
<protein>
    <recommendedName>
        <fullName>Peptide 2</fullName>
    </recommendedName>
    <alternativeName>
        <fullName evidence="3">Peptide II</fullName>
    </alternativeName>
</protein>
<comment type="function">
    <text evidence="1">Blocks potassium channels.</text>
</comment>
<comment type="subcellular location">
    <subcellularLocation>
        <location evidence="2">Secreted</location>
    </subcellularLocation>
</comment>
<comment type="tissue specificity">
    <text evidence="5">Expressed by the venom gland.</text>
</comment>
<comment type="domain">
    <text evidence="4">Has the structural arrangement of an alpha-helix connected to antiparallel beta-sheets by disulfide bonds (CS-alpha/beta).</text>
</comment>
<comment type="similarity">
    <text evidence="4">Belongs to the short scorpion toxin superfamily. Potassium channel inhibitor family. Alpha-KTx 09 subfamily.</text>
</comment>
<sequence>VGCEEDPMHCKGKQAKPTCCNGVCNCNV</sequence>
<organism>
    <name type="scientific">Hottentotta tamulus sindicus</name>
    <name type="common">Scorpion</name>
    <name type="synonym">Buthus sindicus</name>
    <dbReference type="NCBI Taxonomy" id="42519"/>
    <lineage>
        <taxon>Eukaryota</taxon>
        <taxon>Metazoa</taxon>
        <taxon>Ecdysozoa</taxon>
        <taxon>Arthropoda</taxon>
        <taxon>Chelicerata</taxon>
        <taxon>Arachnida</taxon>
        <taxon>Scorpiones</taxon>
        <taxon>Buthida</taxon>
        <taxon>Buthoidea</taxon>
        <taxon>Buthidae</taxon>
        <taxon>Mesobuthus</taxon>
    </lineage>
</organism>
<reference key="1">
    <citation type="journal article" date="1989" name="FEBS Lett.">
        <title>Characterization of two different peptides from the venom of the scorpion Buthus sindicus.</title>
        <authorList>
            <person name="Fazal A."/>
            <person name="Beg O.U."/>
            <person name="Shafqat J."/>
            <person name="Zaidi Z.H."/>
            <person name="Joernvall H."/>
        </authorList>
    </citation>
    <scope>PROTEIN SEQUENCE</scope>
    <scope>SUBCELLULAR LOCATION</scope>
    <source>
        <tissue>Venom</tissue>
    </source>
</reference>
<accession>P15230</accession>